<name>LACC_STAAR</name>
<gene>
    <name evidence="1" type="primary">lacC</name>
    <name type="ordered locus">SAR2284</name>
</gene>
<feature type="chain" id="PRO_0000203918" description="Tagatose-6-phosphate kinase">
    <location>
        <begin position="1"/>
        <end position="310"/>
    </location>
</feature>
<accession>Q6GEN6</accession>
<reference key="1">
    <citation type="journal article" date="2004" name="Proc. Natl. Acad. Sci. U.S.A.">
        <title>Complete genomes of two clinical Staphylococcus aureus strains: evidence for the rapid evolution of virulence and drug resistance.</title>
        <authorList>
            <person name="Holden M.T.G."/>
            <person name="Feil E.J."/>
            <person name="Lindsay J.A."/>
            <person name="Peacock S.J."/>
            <person name="Day N.P.J."/>
            <person name="Enright M.C."/>
            <person name="Foster T.J."/>
            <person name="Moore C.E."/>
            <person name="Hurst L."/>
            <person name="Atkin R."/>
            <person name="Barron A."/>
            <person name="Bason N."/>
            <person name="Bentley S.D."/>
            <person name="Chillingworth C."/>
            <person name="Chillingworth T."/>
            <person name="Churcher C."/>
            <person name="Clark L."/>
            <person name="Corton C."/>
            <person name="Cronin A."/>
            <person name="Doggett J."/>
            <person name="Dowd L."/>
            <person name="Feltwell T."/>
            <person name="Hance Z."/>
            <person name="Harris B."/>
            <person name="Hauser H."/>
            <person name="Holroyd S."/>
            <person name="Jagels K."/>
            <person name="James K.D."/>
            <person name="Lennard N."/>
            <person name="Line A."/>
            <person name="Mayes R."/>
            <person name="Moule S."/>
            <person name="Mungall K."/>
            <person name="Ormond D."/>
            <person name="Quail M.A."/>
            <person name="Rabbinowitsch E."/>
            <person name="Rutherford K.M."/>
            <person name="Sanders M."/>
            <person name="Sharp S."/>
            <person name="Simmonds M."/>
            <person name="Stevens K."/>
            <person name="Whitehead S."/>
            <person name="Barrell B.G."/>
            <person name="Spratt B.G."/>
            <person name="Parkhill J."/>
        </authorList>
    </citation>
    <scope>NUCLEOTIDE SEQUENCE [LARGE SCALE GENOMIC DNA]</scope>
    <source>
        <strain>MRSA252</strain>
    </source>
</reference>
<keyword id="KW-0067">ATP-binding</keyword>
<keyword id="KW-0418">Kinase</keyword>
<keyword id="KW-0423">Lactose metabolism</keyword>
<keyword id="KW-0547">Nucleotide-binding</keyword>
<keyword id="KW-0808">Transferase</keyword>
<evidence type="ECO:0000255" key="1">
    <source>
        <dbReference type="HAMAP-Rule" id="MF_01557"/>
    </source>
</evidence>
<sequence>MILTLTLNPSVDISYPLTALKLDDVNRVQEVSKTAGGKGLNVTRVLAQVGEPVLASGFIGGELGQFIAKKLDHAGIKHAFYNIKGETRNCIAILHEGQQTEILEQGPEIDNQEAAGFIKHFEQLLEKVEAVAISGSLPKGLNQDYYAQIIERCQNKGVPVILDCSGATLQTVLENPYKPTVIKPNISELYQLLNQPLDESLESLKQAVSQPLFEGIEWIIVSLGAQGAFAKHNHTFYRVNIPKISVLNPVGSGDSTVAGITSAILNHENDHDLLKKANTLGMLNAQEAQTGYVNLNNYDDLFNQIEVLEV</sequence>
<organism>
    <name type="scientific">Staphylococcus aureus (strain MRSA252)</name>
    <dbReference type="NCBI Taxonomy" id="282458"/>
    <lineage>
        <taxon>Bacteria</taxon>
        <taxon>Bacillati</taxon>
        <taxon>Bacillota</taxon>
        <taxon>Bacilli</taxon>
        <taxon>Bacillales</taxon>
        <taxon>Staphylococcaceae</taxon>
        <taxon>Staphylococcus</taxon>
    </lineage>
</organism>
<protein>
    <recommendedName>
        <fullName evidence="1">Tagatose-6-phosphate kinase</fullName>
        <ecNumber evidence="1">2.7.1.144</ecNumber>
    </recommendedName>
    <alternativeName>
        <fullName evidence="1">Phosphotagatokinase</fullName>
    </alternativeName>
</protein>
<proteinExistence type="inferred from homology"/>
<comment type="catalytic activity">
    <reaction evidence="1">
        <text>D-tagatofuranose 6-phosphate + ATP = D-tagatofuranose 1,6-bisphosphate + ADP + H(+)</text>
        <dbReference type="Rhea" id="RHEA:12420"/>
        <dbReference type="ChEBI" id="CHEBI:15378"/>
        <dbReference type="ChEBI" id="CHEBI:30616"/>
        <dbReference type="ChEBI" id="CHEBI:58694"/>
        <dbReference type="ChEBI" id="CHEBI:58695"/>
        <dbReference type="ChEBI" id="CHEBI:456216"/>
        <dbReference type="EC" id="2.7.1.144"/>
    </reaction>
</comment>
<comment type="pathway">
    <text evidence="1">Carbohydrate metabolism; D-tagatose 6-phosphate degradation; D-glyceraldehyde 3-phosphate and glycerone phosphate from D-tagatose 6-phosphate: step 1/2.</text>
</comment>
<comment type="similarity">
    <text evidence="1">Belongs to the carbohydrate kinase PfkB family. LacC subfamily.</text>
</comment>
<dbReference type="EC" id="2.7.1.144" evidence="1"/>
<dbReference type="EMBL" id="BX571856">
    <property type="protein sequence ID" value="CAG41262.1"/>
    <property type="molecule type" value="Genomic_DNA"/>
</dbReference>
<dbReference type="RefSeq" id="WP_000604142.1">
    <property type="nucleotide sequence ID" value="NC_002952.2"/>
</dbReference>
<dbReference type="SMR" id="Q6GEN6"/>
<dbReference type="KEGG" id="sar:SAR2284"/>
<dbReference type="HOGENOM" id="CLU_050013_5_0_9"/>
<dbReference type="UniPathway" id="UPA00704">
    <property type="reaction ID" value="UER00715"/>
</dbReference>
<dbReference type="Proteomes" id="UP000000596">
    <property type="component" value="Chromosome"/>
</dbReference>
<dbReference type="GO" id="GO:0005829">
    <property type="term" value="C:cytosol"/>
    <property type="evidence" value="ECO:0007669"/>
    <property type="project" value="TreeGrafter"/>
</dbReference>
<dbReference type="GO" id="GO:0005524">
    <property type="term" value="F:ATP binding"/>
    <property type="evidence" value="ECO:0007669"/>
    <property type="project" value="UniProtKB-KW"/>
</dbReference>
<dbReference type="GO" id="GO:0008443">
    <property type="term" value="F:phosphofructokinase activity"/>
    <property type="evidence" value="ECO:0007669"/>
    <property type="project" value="TreeGrafter"/>
</dbReference>
<dbReference type="GO" id="GO:0009024">
    <property type="term" value="F:tagatose-6-phosphate kinase activity"/>
    <property type="evidence" value="ECO:0007669"/>
    <property type="project" value="UniProtKB-UniRule"/>
</dbReference>
<dbReference type="GO" id="GO:2001059">
    <property type="term" value="P:D-tagatose 6-phosphate catabolic process"/>
    <property type="evidence" value="ECO:0007669"/>
    <property type="project" value="UniProtKB-UniRule"/>
</dbReference>
<dbReference type="GO" id="GO:0019512">
    <property type="term" value="P:lactose catabolic process via tagatose-6-phosphate"/>
    <property type="evidence" value="ECO:0007669"/>
    <property type="project" value="InterPro"/>
</dbReference>
<dbReference type="CDD" id="cd01164">
    <property type="entry name" value="FruK_PfkB_like"/>
    <property type="match status" value="1"/>
</dbReference>
<dbReference type="FunFam" id="3.40.1190.20:FF:000001">
    <property type="entry name" value="Phosphofructokinase"/>
    <property type="match status" value="1"/>
</dbReference>
<dbReference type="Gene3D" id="3.40.1190.20">
    <property type="match status" value="1"/>
</dbReference>
<dbReference type="HAMAP" id="MF_01557">
    <property type="entry name" value="LacC"/>
    <property type="match status" value="1"/>
</dbReference>
<dbReference type="InterPro" id="IPR002173">
    <property type="entry name" value="Carboh/pur_kinase_PfkB_CS"/>
</dbReference>
<dbReference type="InterPro" id="IPR005926">
    <property type="entry name" value="LacC"/>
</dbReference>
<dbReference type="InterPro" id="IPR011611">
    <property type="entry name" value="PfkB_dom"/>
</dbReference>
<dbReference type="InterPro" id="IPR029056">
    <property type="entry name" value="Ribokinase-like"/>
</dbReference>
<dbReference type="InterPro" id="IPR017583">
    <property type="entry name" value="Tagatose/fructose_Pkinase"/>
</dbReference>
<dbReference type="NCBIfam" id="TIGR03168">
    <property type="entry name" value="1-PFK"/>
    <property type="match status" value="1"/>
</dbReference>
<dbReference type="NCBIfam" id="TIGR01231">
    <property type="entry name" value="lacC"/>
    <property type="match status" value="1"/>
</dbReference>
<dbReference type="NCBIfam" id="NF010033">
    <property type="entry name" value="PRK13508.1"/>
    <property type="match status" value="1"/>
</dbReference>
<dbReference type="PANTHER" id="PTHR46566:SF5">
    <property type="entry name" value="1-PHOSPHOFRUCTOKINASE"/>
    <property type="match status" value="1"/>
</dbReference>
<dbReference type="PANTHER" id="PTHR46566">
    <property type="entry name" value="1-PHOSPHOFRUCTOKINASE-RELATED"/>
    <property type="match status" value="1"/>
</dbReference>
<dbReference type="Pfam" id="PF00294">
    <property type="entry name" value="PfkB"/>
    <property type="match status" value="1"/>
</dbReference>
<dbReference type="PIRSF" id="PIRSF000535">
    <property type="entry name" value="1PFK/6PFK/LacC"/>
    <property type="match status" value="1"/>
</dbReference>
<dbReference type="SUPFAM" id="SSF53613">
    <property type="entry name" value="Ribokinase-like"/>
    <property type="match status" value="1"/>
</dbReference>
<dbReference type="PROSITE" id="PS00583">
    <property type="entry name" value="PFKB_KINASES_1"/>
    <property type="match status" value="1"/>
</dbReference>
<dbReference type="PROSITE" id="PS00584">
    <property type="entry name" value="PFKB_KINASES_2"/>
    <property type="match status" value="1"/>
</dbReference>